<sequence>MERTELLKPRTLADLIRILHELFAGDEVNVEEVQAVLEAYESNPAEWALYAKFDQYRYTRNLVDQGNGKFNLMILCWGEGHGSSIHDHTDSHCFLKLLQGNLKETLFDWPDKKSNEMIKKSERTLRENQCAYINDSIGLHRVENVSHTEPAVSLHLYSPPFDTCHAFDQRTGHKNKVTMTFHSKFGIRTPFTTSGSLENN</sequence>
<protein>
    <recommendedName>
        <fullName>Cysteine dioxygenase type 1</fullName>
        <ecNumber evidence="4">1.13.11.20</ecNumber>
    </recommendedName>
    <alternativeName>
        <fullName>Cysteine dioxygenase type I</fullName>
        <shortName>CDO</shortName>
        <shortName>CDO-I</shortName>
    </alternativeName>
</protein>
<proteinExistence type="evidence at protein level"/>
<reference key="1">
    <citation type="journal article" date="1990" name="Biochem. Biophys. Res. Commun.">
        <title>Isolation and characterization of a cDNA for rat liver cysteine dioxygenase.</title>
        <authorList>
            <person name="Hosokawa Y."/>
            <person name="Matsumoto A."/>
            <person name="Oka J."/>
            <person name="Itakura H."/>
            <person name="Yamaguchi K."/>
        </authorList>
    </citation>
    <scope>NUCLEOTIDE SEQUENCE [MRNA]</scope>
    <scope>PARTIAL PROTEIN SEQUENCE</scope>
    <source>
        <tissue>Liver</tissue>
    </source>
</reference>
<reference key="2">
    <citation type="journal article" date="1996" name="Gene">
        <title>Structural organization and tissue-specific expression of the gene encoding rat cysteine dioxygenase.</title>
        <authorList>
            <person name="Tsuboyama N."/>
            <person name="Hosokawa Y."/>
            <person name="Totani M."/>
            <person name="Oka J."/>
            <person name="Matsumoto A."/>
            <person name="Koide T."/>
            <person name="Kodama H."/>
        </authorList>
    </citation>
    <scope>NUCLEOTIDE SEQUENCE [GENOMIC DNA]</scope>
    <scope>TISSUE SPECIFICITY</scope>
    <source>
        <strain>Sprague-Dawley</strain>
        <tissue>Liver</tissue>
    </source>
</reference>
<reference key="3">
    <citation type="journal article" date="2004" name="Genome Res.">
        <title>The status, quality, and expansion of the NIH full-length cDNA project: the Mammalian Gene Collection (MGC).</title>
        <authorList>
            <consortium name="The MGC Project Team"/>
        </authorList>
    </citation>
    <scope>NUCLEOTIDE SEQUENCE [LARGE SCALE MRNA]</scope>
    <source>
        <tissue>Lung</tissue>
    </source>
</reference>
<reference key="4">
    <citation type="journal article" date="1998" name="J. Hepatol.">
        <title>Hepatic localisation of rat cysteine dioxygenase.</title>
        <authorList>
            <person name="Parsons R.B."/>
            <person name="Ramsden D.B."/>
            <person name="Waring R.H."/>
            <person name="Barber P.C."/>
            <person name="Williams A.C."/>
        </authorList>
    </citation>
    <scope>FUNCTION</scope>
    <scope>CATALYTIC ACTIVITY</scope>
    <scope>TISSUE SPECIFICITY</scope>
    <scope>INDUCTION</scope>
</reference>
<reference key="5">
    <citation type="journal article" date="2012" name="Nat. Commun.">
        <title>Quantitative maps of protein phosphorylation sites across 14 different rat organs and tissues.</title>
        <authorList>
            <person name="Lundby A."/>
            <person name="Secher A."/>
            <person name="Lage K."/>
            <person name="Nordsborg N.B."/>
            <person name="Dmytriyev A."/>
            <person name="Lundby C."/>
            <person name="Olsen J.V."/>
        </authorList>
    </citation>
    <scope>IDENTIFICATION BY MASS SPECTROMETRY [LARGE SCALE ANALYSIS]</scope>
</reference>
<reference key="6">
    <citation type="journal article" date="2006" name="J. Biol. Chem.">
        <title>Crystal structure of mammalian cysteine dioxygenase. A novel mononuclear iron center for cysteine thiol oxidation.</title>
        <authorList>
            <person name="Simmons C.R."/>
            <person name="Liu Q."/>
            <person name="Huang Q."/>
            <person name="Hao Q."/>
            <person name="Begley T.P."/>
            <person name="Karplus P.A."/>
            <person name="Stipanuk M.H."/>
        </authorList>
    </citation>
    <scope>X-RAY CRYSTALLOGRAPHY (1.5 ANGSTROMS) IN COMPLEX WITH IRON</scope>
    <scope>CROSS-LINK</scope>
    <scope>SUBUNIT</scope>
    <scope>COFACTOR</scope>
    <scope>PTM</scope>
    <scope>IRON-BINDING SITES</scope>
</reference>
<dbReference type="EC" id="1.13.11.20" evidence="4"/>
<dbReference type="EMBL" id="M35266">
    <property type="protein sequence ID" value="AAA40904.1"/>
    <property type="molecule type" value="mRNA"/>
</dbReference>
<dbReference type="EMBL" id="D83481">
    <property type="protein sequence ID" value="BAA11925.1"/>
    <property type="molecule type" value="Genomic_DNA"/>
</dbReference>
<dbReference type="EMBL" id="BC070509">
    <property type="protein sequence ID" value="AAH70509.1"/>
    <property type="molecule type" value="mRNA"/>
</dbReference>
<dbReference type="PIR" id="A34632">
    <property type="entry name" value="A34632"/>
</dbReference>
<dbReference type="RefSeq" id="NP_434696.1">
    <property type="nucleotide sequence ID" value="NM_052809.2"/>
</dbReference>
<dbReference type="PDB" id="2B5H">
    <property type="method" value="X-ray"/>
    <property type="resolution" value="1.50 A"/>
    <property type="chains" value="A=1-200"/>
</dbReference>
<dbReference type="PDB" id="2GH2">
    <property type="method" value="X-ray"/>
    <property type="resolution" value="1.50 A"/>
    <property type="chains" value="A=1-200"/>
</dbReference>
<dbReference type="PDB" id="3ELN">
    <property type="method" value="X-ray"/>
    <property type="resolution" value="1.42 A"/>
    <property type="chains" value="A=1-200"/>
</dbReference>
<dbReference type="PDB" id="4IEO">
    <property type="method" value="X-ray"/>
    <property type="resolution" value="1.55 A"/>
    <property type="chains" value="A=1-200"/>
</dbReference>
<dbReference type="PDB" id="4IEP">
    <property type="method" value="X-ray"/>
    <property type="resolution" value="1.45 A"/>
    <property type="chains" value="A=1-200"/>
</dbReference>
<dbReference type="PDB" id="4IEQ">
    <property type="method" value="X-ray"/>
    <property type="resolution" value="1.40 A"/>
    <property type="chains" value="A=1-200"/>
</dbReference>
<dbReference type="PDB" id="4IER">
    <property type="method" value="X-ray"/>
    <property type="resolution" value="1.45 A"/>
    <property type="chains" value="A=1-200"/>
</dbReference>
<dbReference type="PDB" id="4IES">
    <property type="method" value="X-ray"/>
    <property type="resolution" value="1.40 A"/>
    <property type="chains" value="A=1-200"/>
</dbReference>
<dbReference type="PDB" id="4IET">
    <property type="method" value="X-ray"/>
    <property type="resolution" value="1.40 A"/>
    <property type="chains" value="A=1-200"/>
</dbReference>
<dbReference type="PDB" id="4IEU">
    <property type="method" value="X-ray"/>
    <property type="resolution" value="1.25 A"/>
    <property type="chains" value="A=1-200"/>
</dbReference>
<dbReference type="PDB" id="4IEV">
    <property type="method" value="X-ray"/>
    <property type="resolution" value="1.60 A"/>
    <property type="chains" value="A=1-200"/>
</dbReference>
<dbReference type="PDB" id="4IEW">
    <property type="method" value="X-ray"/>
    <property type="resolution" value="1.45 A"/>
    <property type="chains" value="A=1-200"/>
</dbReference>
<dbReference type="PDB" id="4IEX">
    <property type="method" value="X-ray"/>
    <property type="resolution" value="2.15 A"/>
    <property type="chains" value="A=1-200"/>
</dbReference>
<dbReference type="PDB" id="4IEY">
    <property type="method" value="X-ray"/>
    <property type="resolution" value="1.63 A"/>
    <property type="chains" value="A=1-200"/>
</dbReference>
<dbReference type="PDB" id="4IEZ">
    <property type="method" value="X-ray"/>
    <property type="resolution" value="1.39 A"/>
    <property type="chains" value="A=1-200"/>
</dbReference>
<dbReference type="PDB" id="4JTN">
    <property type="method" value="X-ray"/>
    <property type="resolution" value="1.59 A"/>
    <property type="chains" value="A=1-200"/>
</dbReference>
<dbReference type="PDB" id="4JTO">
    <property type="method" value="X-ray"/>
    <property type="resolution" value="2.00 A"/>
    <property type="chains" value="A=1-200"/>
</dbReference>
<dbReference type="PDB" id="4KWJ">
    <property type="method" value="X-ray"/>
    <property type="resolution" value="1.75 A"/>
    <property type="chains" value="A=1-200"/>
</dbReference>
<dbReference type="PDB" id="4KWK">
    <property type="method" value="X-ray"/>
    <property type="resolution" value="1.95 A"/>
    <property type="chains" value="A=1-200"/>
</dbReference>
<dbReference type="PDB" id="4KWL">
    <property type="method" value="X-ray"/>
    <property type="resolution" value="1.63 A"/>
    <property type="chains" value="A=1-200"/>
</dbReference>
<dbReference type="PDB" id="4PIX">
    <property type="method" value="X-ray"/>
    <property type="resolution" value="1.35 A"/>
    <property type="chains" value="A=1-200"/>
</dbReference>
<dbReference type="PDB" id="4PIY">
    <property type="method" value="X-ray"/>
    <property type="resolution" value="1.60 A"/>
    <property type="chains" value="A=1-200"/>
</dbReference>
<dbReference type="PDB" id="4PIZ">
    <property type="method" value="X-ray"/>
    <property type="resolution" value="1.40 A"/>
    <property type="chains" value="A=1-200"/>
</dbReference>
<dbReference type="PDB" id="4PJY">
    <property type="method" value="X-ray"/>
    <property type="resolution" value="1.50 A"/>
    <property type="chains" value="A=1-200"/>
</dbReference>
<dbReference type="PDB" id="4UBG">
    <property type="method" value="X-ray"/>
    <property type="resolution" value="1.90 A"/>
    <property type="chains" value="A=1-200"/>
</dbReference>
<dbReference type="PDB" id="4UBH">
    <property type="method" value="X-ray"/>
    <property type="resolution" value="1.81 A"/>
    <property type="chains" value="A=1-200"/>
</dbReference>
<dbReference type="PDB" id="4XET">
    <property type="method" value="X-ray"/>
    <property type="resolution" value="1.30 A"/>
    <property type="chains" value="A=1-200"/>
</dbReference>
<dbReference type="PDB" id="4XEZ">
    <property type="method" value="X-ray"/>
    <property type="resolution" value="1.25 A"/>
    <property type="chains" value="A=1-200"/>
</dbReference>
<dbReference type="PDB" id="4XF0">
    <property type="method" value="X-ray"/>
    <property type="resolution" value="1.40 A"/>
    <property type="chains" value="A=1-200"/>
</dbReference>
<dbReference type="PDB" id="4XF1">
    <property type="method" value="X-ray"/>
    <property type="resolution" value="1.55 A"/>
    <property type="chains" value="A=1-200"/>
</dbReference>
<dbReference type="PDB" id="4XF3">
    <property type="method" value="X-ray"/>
    <property type="resolution" value="1.55 A"/>
    <property type="chains" value="A=1-200"/>
</dbReference>
<dbReference type="PDB" id="4XF4">
    <property type="method" value="X-ray"/>
    <property type="resolution" value="1.35 A"/>
    <property type="chains" value="A=1-200"/>
</dbReference>
<dbReference type="PDB" id="4XF9">
    <property type="method" value="X-ray"/>
    <property type="resolution" value="1.30 A"/>
    <property type="chains" value="A=1-200"/>
</dbReference>
<dbReference type="PDB" id="4XFA">
    <property type="method" value="X-ray"/>
    <property type="resolution" value="1.65 A"/>
    <property type="chains" value="A=1-200"/>
</dbReference>
<dbReference type="PDB" id="4XFB">
    <property type="method" value="X-ray"/>
    <property type="resolution" value="1.35 A"/>
    <property type="chains" value="A=1-200"/>
</dbReference>
<dbReference type="PDB" id="4XFC">
    <property type="method" value="X-ray"/>
    <property type="resolution" value="1.35 A"/>
    <property type="chains" value="A=1-200"/>
</dbReference>
<dbReference type="PDB" id="4XFF">
    <property type="method" value="X-ray"/>
    <property type="resolution" value="1.25 A"/>
    <property type="chains" value="A=1-200"/>
</dbReference>
<dbReference type="PDB" id="4XFG">
    <property type="method" value="X-ray"/>
    <property type="resolution" value="1.40 A"/>
    <property type="chains" value="A=1-200"/>
</dbReference>
<dbReference type="PDB" id="4XFH">
    <property type="method" value="X-ray"/>
    <property type="resolution" value="1.35 A"/>
    <property type="chains" value="A=1-200"/>
</dbReference>
<dbReference type="PDB" id="4XFI">
    <property type="method" value="X-ray"/>
    <property type="resolution" value="1.40 A"/>
    <property type="chains" value="A=1-200"/>
</dbReference>
<dbReference type="PDB" id="4YNI">
    <property type="method" value="X-ray"/>
    <property type="resolution" value="2.40 A"/>
    <property type="chains" value="A=1-200"/>
</dbReference>
<dbReference type="PDB" id="4YSF">
    <property type="method" value="X-ray"/>
    <property type="resolution" value="1.94 A"/>
    <property type="chains" value="A=1-200"/>
</dbReference>
<dbReference type="PDB" id="4YYO">
    <property type="method" value="X-ray"/>
    <property type="resolution" value="1.77 A"/>
    <property type="chains" value="A=1-200"/>
</dbReference>
<dbReference type="PDB" id="4Z82">
    <property type="method" value="X-ray"/>
    <property type="resolution" value="1.70 A"/>
    <property type="chains" value="A=1-200"/>
</dbReference>
<dbReference type="PDB" id="5EFU">
    <property type="method" value="X-ray"/>
    <property type="resolution" value="2.80 A"/>
    <property type="chains" value="A=1-200"/>
</dbReference>
<dbReference type="PDB" id="5EZW">
    <property type="method" value="X-ray"/>
    <property type="resolution" value="1.65 A"/>
    <property type="chains" value="A=1-200"/>
</dbReference>
<dbReference type="PDB" id="5FDB">
    <property type="method" value="X-ray"/>
    <property type="resolution" value="1.75 A"/>
    <property type="chains" value="A=1-200"/>
</dbReference>
<dbReference type="PDB" id="5I0R">
    <property type="method" value="X-ray"/>
    <property type="resolution" value="1.35 A"/>
    <property type="chains" value="A=1-200"/>
</dbReference>
<dbReference type="PDB" id="5I0S">
    <property type="method" value="X-ray"/>
    <property type="resolution" value="1.30 A"/>
    <property type="chains" value="A=1-200"/>
</dbReference>
<dbReference type="PDB" id="5I0T">
    <property type="method" value="X-ray"/>
    <property type="resolution" value="1.37 A"/>
    <property type="chains" value="A=1-200"/>
</dbReference>
<dbReference type="PDB" id="5I0U">
    <property type="method" value="X-ray"/>
    <property type="resolution" value="1.25 A"/>
    <property type="chains" value="A=1-200"/>
</dbReference>
<dbReference type="PDB" id="6U1M">
    <property type="method" value="X-ray"/>
    <property type="resolution" value="1.61 A"/>
    <property type="chains" value="A=1-200"/>
</dbReference>
<dbReference type="PDB" id="6U4L">
    <property type="method" value="X-ray"/>
    <property type="resolution" value="1.91 A"/>
    <property type="chains" value="A=1-200"/>
</dbReference>
<dbReference type="PDB" id="6U4S">
    <property type="method" value="X-ray"/>
    <property type="resolution" value="2.49 A"/>
    <property type="chains" value="A=1-200"/>
</dbReference>
<dbReference type="PDB" id="6U4V">
    <property type="method" value="X-ray"/>
    <property type="resolution" value="2.30 A"/>
    <property type="chains" value="A=1-200"/>
</dbReference>
<dbReference type="PDBsum" id="2B5H"/>
<dbReference type="PDBsum" id="2GH2"/>
<dbReference type="PDBsum" id="3ELN"/>
<dbReference type="PDBsum" id="4IEO"/>
<dbReference type="PDBsum" id="4IEP"/>
<dbReference type="PDBsum" id="4IEQ"/>
<dbReference type="PDBsum" id="4IER"/>
<dbReference type="PDBsum" id="4IES"/>
<dbReference type="PDBsum" id="4IET"/>
<dbReference type="PDBsum" id="4IEU"/>
<dbReference type="PDBsum" id="4IEV"/>
<dbReference type="PDBsum" id="4IEW"/>
<dbReference type="PDBsum" id="4IEX"/>
<dbReference type="PDBsum" id="4IEY"/>
<dbReference type="PDBsum" id="4IEZ"/>
<dbReference type="PDBsum" id="4JTN"/>
<dbReference type="PDBsum" id="4JTO"/>
<dbReference type="PDBsum" id="4KWJ"/>
<dbReference type="PDBsum" id="4KWK"/>
<dbReference type="PDBsum" id="4KWL"/>
<dbReference type="PDBsum" id="4PIX"/>
<dbReference type="PDBsum" id="4PIY"/>
<dbReference type="PDBsum" id="4PIZ"/>
<dbReference type="PDBsum" id="4PJY"/>
<dbReference type="PDBsum" id="4UBG"/>
<dbReference type="PDBsum" id="4UBH"/>
<dbReference type="PDBsum" id="4XET"/>
<dbReference type="PDBsum" id="4XEZ"/>
<dbReference type="PDBsum" id="4XF0"/>
<dbReference type="PDBsum" id="4XF1"/>
<dbReference type="PDBsum" id="4XF3"/>
<dbReference type="PDBsum" id="4XF4"/>
<dbReference type="PDBsum" id="4XF9"/>
<dbReference type="PDBsum" id="4XFA"/>
<dbReference type="PDBsum" id="4XFB"/>
<dbReference type="PDBsum" id="4XFC"/>
<dbReference type="PDBsum" id="4XFF"/>
<dbReference type="PDBsum" id="4XFG"/>
<dbReference type="PDBsum" id="4XFH"/>
<dbReference type="PDBsum" id="4XFI"/>
<dbReference type="PDBsum" id="4YNI"/>
<dbReference type="PDBsum" id="4YSF"/>
<dbReference type="PDBsum" id="4YYO"/>
<dbReference type="PDBsum" id="4Z82"/>
<dbReference type="PDBsum" id="5EFU"/>
<dbReference type="PDBsum" id="5EZW"/>
<dbReference type="PDBsum" id="5FDB"/>
<dbReference type="PDBsum" id="5I0R"/>
<dbReference type="PDBsum" id="5I0S"/>
<dbReference type="PDBsum" id="5I0T"/>
<dbReference type="PDBsum" id="5I0U"/>
<dbReference type="PDBsum" id="6U1M"/>
<dbReference type="PDBsum" id="6U4L"/>
<dbReference type="PDBsum" id="6U4S"/>
<dbReference type="PDBsum" id="6U4V"/>
<dbReference type="SMR" id="P21816"/>
<dbReference type="FunCoup" id="P21816">
    <property type="interactions" value="273"/>
</dbReference>
<dbReference type="IntAct" id="P21816">
    <property type="interactions" value="13"/>
</dbReference>
<dbReference type="STRING" id="10116.ENSRNOP00000000172"/>
<dbReference type="PhosphoSitePlus" id="P21816"/>
<dbReference type="jPOST" id="P21816"/>
<dbReference type="PaxDb" id="10116-ENSRNOP00000000172"/>
<dbReference type="DNASU" id="81718"/>
<dbReference type="Ensembl" id="ENSRNOT00000000172.6">
    <property type="protein sequence ID" value="ENSRNOP00000000172.4"/>
    <property type="gene ID" value="ENSRNOG00000000158.6"/>
</dbReference>
<dbReference type="GeneID" id="81718"/>
<dbReference type="KEGG" id="rno:81718"/>
<dbReference type="UCSC" id="RGD:69262">
    <property type="organism name" value="rat"/>
</dbReference>
<dbReference type="AGR" id="RGD:69262"/>
<dbReference type="CTD" id="1036"/>
<dbReference type="RGD" id="69262">
    <property type="gene designation" value="Cdo1"/>
</dbReference>
<dbReference type="eggNOG" id="KOG4064">
    <property type="taxonomic scope" value="Eukaryota"/>
</dbReference>
<dbReference type="GeneTree" id="ENSGT00390000018226"/>
<dbReference type="HOGENOM" id="CLU_079443_1_0_1"/>
<dbReference type="InParanoid" id="P21816"/>
<dbReference type="OMA" id="YTENQVT"/>
<dbReference type="OrthoDB" id="543511at2759"/>
<dbReference type="PhylomeDB" id="P21816"/>
<dbReference type="TreeFam" id="TF105636"/>
<dbReference type="BioCyc" id="MetaCyc:MONOMER-8844"/>
<dbReference type="BRENDA" id="1.13.11.20">
    <property type="organism ID" value="5301"/>
</dbReference>
<dbReference type="Reactome" id="R-RNO-1614558">
    <property type="pathway name" value="Degradation of cysteine and homocysteine"/>
</dbReference>
<dbReference type="SABIO-RK" id="P21816"/>
<dbReference type="UniPathway" id="UPA00012">
    <property type="reaction ID" value="UER00537"/>
</dbReference>
<dbReference type="EvolutionaryTrace" id="P21816"/>
<dbReference type="PRO" id="PR:P21816"/>
<dbReference type="Proteomes" id="UP000002494">
    <property type="component" value="Chromosome 18"/>
</dbReference>
<dbReference type="Bgee" id="ENSRNOG00000000158">
    <property type="expression patterns" value="Expressed in liver and 20 other cell types or tissues"/>
</dbReference>
<dbReference type="GO" id="GO:0005829">
    <property type="term" value="C:cytosol"/>
    <property type="evidence" value="ECO:0000266"/>
    <property type="project" value="RGD"/>
</dbReference>
<dbReference type="GO" id="GO:0017172">
    <property type="term" value="F:cysteine dioxygenase activity"/>
    <property type="evidence" value="ECO:0000314"/>
    <property type="project" value="UniProtKB"/>
</dbReference>
<dbReference type="GO" id="GO:0008198">
    <property type="term" value="F:ferrous iron binding"/>
    <property type="evidence" value="ECO:0000314"/>
    <property type="project" value="RGD"/>
</dbReference>
<dbReference type="GO" id="GO:0016151">
    <property type="term" value="F:nickel cation binding"/>
    <property type="evidence" value="ECO:0000250"/>
    <property type="project" value="UniProtKB"/>
</dbReference>
<dbReference type="GO" id="GO:0008270">
    <property type="term" value="F:zinc ion binding"/>
    <property type="evidence" value="ECO:0000266"/>
    <property type="project" value="RGD"/>
</dbReference>
<dbReference type="GO" id="GO:0006534">
    <property type="term" value="P:cysteine metabolic process"/>
    <property type="evidence" value="ECO:0000304"/>
    <property type="project" value="RGD"/>
</dbReference>
<dbReference type="GO" id="GO:0019448">
    <property type="term" value="P:L-cysteine catabolic process"/>
    <property type="evidence" value="ECO:0000314"/>
    <property type="project" value="RGD"/>
</dbReference>
<dbReference type="GO" id="GO:0046439">
    <property type="term" value="P:L-cysteine metabolic process"/>
    <property type="evidence" value="ECO:0000303"/>
    <property type="project" value="RGD"/>
</dbReference>
<dbReference type="GO" id="GO:0007595">
    <property type="term" value="P:lactation"/>
    <property type="evidence" value="ECO:0000314"/>
    <property type="project" value="RGD"/>
</dbReference>
<dbReference type="GO" id="GO:0043200">
    <property type="term" value="P:response to amino acid"/>
    <property type="evidence" value="ECO:0000314"/>
    <property type="project" value="RGD"/>
</dbReference>
<dbReference type="GO" id="GO:0097184">
    <property type="term" value="P:response to azide"/>
    <property type="evidence" value="ECO:0000314"/>
    <property type="project" value="RGD"/>
</dbReference>
<dbReference type="GO" id="GO:0051591">
    <property type="term" value="P:response to cAMP"/>
    <property type="evidence" value="ECO:0000314"/>
    <property type="project" value="RGD"/>
</dbReference>
<dbReference type="GO" id="GO:0045471">
    <property type="term" value="P:response to ethanol"/>
    <property type="evidence" value="ECO:0000314"/>
    <property type="project" value="RGD"/>
</dbReference>
<dbReference type="GO" id="GO:0033762">
    <property type="term" value="P:response to glucagon"/>
    <property type="evidence" value="ECO:0000314"/>
    <property type="project" value="RGD"/>
</dbReference>
<dbReference type="GO" id="GO:0051384">
    <property type="term" value="P:response to glucocorticoid"/>
    <property type="evidence" value="ECO:0000314"/>
    <property type="project" value="RGD"/>
</dbReference>
<dbReference type="GO" id="GO:0042412">
    <property type="term" value="P:taurine biosynthetic process"/>
    <property type="evidence" value="ECO:0007669"/>
    <property type="project" value="UniProtKB-UniPathway"/>
</dbReference>
<dbReference type="CDD" id="cd10548">
    <property type="entry name" value="cupin_CDO"/>
    <property type="match status" value="1"/>
</dbReference>
<dbReference type="FunFam" id="2.60.120.10:FF:000045">
    <property type="entry name" value="Cysteine dioxygenase 1"/>
    <property type="match status" value="1"/>
</dbReference>
<dbReference type="Gene3D" id="2.60.120.10">
    <property type="entry name" value="Jelly Rolls"/>
    <property type="match status" value="1"/>
</dbReference>
<dbReference type="InterPro" id="IPR010300">
    <property type="entry name" value="CDO_1"/>
</dbReference>
<dbReference type="InterPro" id="IPR014710">
    <property type="entry name" value="RmlC-like_jellyroll"/>
</dbReference>
<dbReference type="InterPro" id="IPR011051">
    <property type="entry name" value="RmlC_Cupin_sf"/>
</dbReference>
<dbReference type="PANTHER" id="PTHR12918">
    <property type="entry name" value="CYSTEINE DIOXYGENASE"/>
    <property type="match status" value="1"/>
</dbReference>
<dbReference type="PANTHER" id="PTHR12918:SF1">
    <property type="entry name" value="CYSTEINE DIOXYGENASE TYPE 1"/>
    <property type="match status" value="1"/>
</dbReference>
<dbReference type="Pfam" id="PF05995">
    <property type="entry name" value="CDO_I"/>
    <property type="match status" value="1"/>
</dbReference>
<dbReference type="SUPFAM" id="SSF51182">
    <property type="entry name" value="RmlC-like cupins"/>
    <property type="match status" value="1"/>
</dbReference>
<organism>
    <name type="scientific">Rattus norvegicus</name>
    <name type="common">Rat</name>
    <dbReference type="NCBI Taxonomy" id="10116"/>
    <lineage>
        <taxon>Eukaryota</taxon>
        <taxon>Metazoa</taxon>
        <taxon>Chordata</taxon>
        <taxon>Craniata</taxon>
        <taxon>Vertebrata</taxon>
        <taxon>Euteleostomi</taxon>
        <taxon>Mammalia</taxon>
        <taxon>Eutheria</taxon>
        <taxon>Euarchontoglires</taxon>
        <taxon>Glires</taxon>
        <taxon>Rodentia</taxon>
        <taxon>Myomorpha</taxon>
        <taxon>Muroidea</taxon>
        <taxon>Muridae</taxon>
        <taxon>Murinae</taxon>
        <taxon>Rattus</taxon>
    </lineage>
</organism>
<keyword id="KW-0002">3D-structure</keyword>
<keyword id="KW-0223">Dioxygenase</keyword>
<keyword id="KW-0903">Direct protein sequencing</keyword>
<keyword id="KW-0408">Iron</keyword>
<keyword id="KW-0479">Metal-binding</keyword>
<keyword id="KW-0560">Oxidoreductase</keyword>
<keyword id="KW-1185">Reference proteome</keyword>
<keyword id="KW-0883">Thioether bond</keyword>
<accession>P21816</accession>
<accession>Q6NS32</accession>
<evidence type="ECO:0000250" key="1">
    <source>
        <dbReference type="UniProtKB" id="P60334"/>
    </source>
</evidence>
<evidence type="ECO:0000269" key="2">
    <source>
    </source>
</evidence>
<evidence type="ECO:0000269" key="3">
    <source>
    </source>
</evidence>
<evidence type="ECO:0000269" key="4">
    <source>
    </source>
</evidence>
<evidence type="ECO:0000305" key="5"/>
<evidence type="ECO:0007829" key="6">
    <source>
        <dbReference type="PDB" id="4XEZ"/>
    </source>
</evidence>
<evidence type="ECO:0007829" key="7">
    <source>
        <dbReference type="PDB" id="4XFF"/>
    </source>
</evidence>
<evidence type="ECO:0007829" key="8">
    <source>
        <dbReference type="PDB" id="6U1M"/>
    </source>
</evidence>
<gene>
    <name type="primary">Cdo1</name>
</gene>
<name>CDO1_RAT</name>
<feature type="chain" id="PRO_0000206609" description="Cysteine dioxygenase type 1">
    <location>
        <begin position="1"/>
        <end position="200"/>
    </location>
</feature>
<feature type="binding site" evidence="2">
    <location>
        <position position="86"/>
    </location>
    <ligand>
        <name>Fe cation</name>
        <dbReference type="ChEBI" id="CHEBI:24875"/>
        <note>catalytic</note>
    </ligand>
</feature>
<feature type="binding site" evidence="2">
    <location>
        <position position="88"/>
    </location>
    <ligand>
        <name>Fe cation</name>
        <dbReference type="ChEBI" id="CHEBI:24875"/>
        <note>catalytic</note>
    </ligand>
</feature>
<feature type="binding site" evidence="2">
    <location>
        <position position="140"/>
    </location>
    <ligand>
        <name>Fe cation</name>
        <dbReference type="ChEBI" id="CHEBI:24875"/>
        <note>catalytic</note>
    </ligand>
</feature>
<feature type="cross-link" description="3'-(S-cysteinyl)-tyrosine (Cys-Tyr)" evidence="2">
    <location>
        <begin position="93"/>
        <end position="157"/>
    </location>
</feature>
<feature type="sequence conflict" description="In Ref. 3; AAH70509." evidence="5" ref="3">
    <original>T</original>
    <variation>S</variation>
    <location>
        <position position="89"/>
    </location>
</feature>
<feature type="helix" evidence="6">
    <location>
        <begin position="12"/>
        <end position="22"/>
    </location>
</feature>
<feature type="strand" evidence="6">
    <location>
        <begin position="24"/>
        <end position="27"/>
    </location>
</feature>
<feature type="helix" evidence="6">
    <location>
        <begin position="30"/>
        <end position="39"/>
    </location>
</feature>
<feature type="helix" evidence="6">
    <location>
        <begin position="44"/>
        <end position="47"/>
    </location>
</feature>
<feature type="helix" evidence="6">
    <location>
        <begin position="48"/>
        <end position="50"/>
    </location>
</feature>
<feature type="strand" evidence="6">
    <location>
        <begin position="55"/>
        <end position="57"/>
    </location>
</feature>
<feature type="strand" evidence="6">
    <location>
        <begin position="59"/>
        <end position="64"/>
    </location>
</feature>
<feature type="helix" evidence="7">
    <location>
        <begin position="66"/>
        <end position="68"/>
    </location>
</feature>
<feature type="strand" evidence="6">
    <location>
        <begin position="71"/>
        <end position="77"/>
    </location>
</feature>
<feature type="strand" evidence="6">
    <location>
        <begin position="92"/>
        <end position="100"/>
    </location>
</feature>
<feature type="strand" evidence="6">
    <location>
        <begin position="102"/>
        <end position="107"/>
    </location>
</feature>
<feature type="strand" evidence="8">
    <location>
        <begin position="112"/>
        <end position="114"/>
    </location>
</feature>
<feature type="strand" evidence="6">
    <location>
        <begin position="121"/>
        <end position="125"/>
    </location>
</feature>
<feature type="strand" evidence="6">
    <location>
        <begin position="130"/>
        <end position="133"/>
    </location>
</feature>
<feature type="turn" evidence="6">
    <location>
        <begin position="135"/>
        <end position="137"/>
    </location>
</feature>
<feature type="strand" evidence="6">
    <location>
        <begin position="139"/>
        <end position="143"/>
    </location>
</feature>
<feature type="strand" evidence="6">
    <location>
        <begin position="151"/>
        <end position="159"/>
    </location>
</feature>
<feature type="strand" evidence="6">
    <location>
        <begin position="162"/>
        <end position="167"/>
    </location>
</feature>
<feature type="turn" evidence="6">
    <location>
        <begin position="169"/>
        <end position="171"/>
    </location>
</feature>
<feature type="strand" evidence="6">
    <location>
        <begin position="174"/>
        <end position="178"/>
    </location>
</feature>
<feature type="strand" evidence="6">
    <location>
        <begin position="182"/>
        <end position="184"/>
    </location>
</feature>
<comment type="function">
    <text evidence="4">Catalyzes the oxidation of cysteine to cysteine sulfinic acid with addition of molecular dioxygen.</text>
</comment>
<comment type="catalytic activity">
    <reaction evidence="4">
        <text>L-cysteine + O2 = 3-sulfino-L-alanine + H(+)</text>
        <dbReference type="Rhea" id="RHEA:20441"/>
        <dbReference type="ChEBI" id="CHEBI:15378"/>
        <dbReference type="ChEBI" id="CHEBI:15379"/>
        <dbReference type="ChEBI" id="CHEBI:35235"/>
        <dbReference type="ChEBI" id="CHEBI:61085"/>
        <dbReference type="EC" id="1.13.11.20"/>
    </reaction>
    <physiologicalReaction direction="left-to-right" evidence="4">
        <dbReference type="Rhea" id="RHEA:20442"/>
    </physiologicalReaction>
</comment>
<comment type="cofactor">
    <cofactor evidence="2">
        <name>Fe cation</name>
        <dbReference type="ChEBI" id="CHEBI:24875"/>
    </cofactor>
    <cofactor evidence="1">
        <name>Ni(2+)</name>
        <dbReference type="ChEBI" id="CHEBI:49786"/>
    </cofactor>
    <cofactor evidence="1">
        <name>Zn(2+)</name>
        <dbReference type="ChEBI" id="CHEBI:29105"/>
    </cofactor>
    <text evidence="1 2">Binds 1 Fe cation per subunit (PubMed:16611640). Ni(2+) and Zn(2+) can be used to a lesser extent (By similarity).</text>
</comment>
<comment type="pathway">
    <text>Organosulfur biosynthesis; taurine biosynthesis; hypotaurine from L-cysteine: step 1/2.</text>
</comment>
<comment type="subunit">
    <text evidence="2">Monomer.</text>
</comment>
<comment type="tissue specificity">
    <text evidence="3 4">Highest levels in liver. Significant expression also in kidney, lung and brain.</text>
</comment>
<comment type="developmental stage">
    <text>From neonate to weaning.</text>
</comment>
<comment type="induction">
    <text evidence="4">By increase of sulfur amino acid intake.</text>
</comment>
<comment type="PTM">
    <text evidence="2">The thioether cross-link between Cys-93 and Tyr-157 plays a structural role through stabilizing the Fe(2+) ion, and prevents the production of highly damaging free hydroxyl radicals by holding the oxygen radical via hydroxyl hydrogen.</text>
</comment>
<comment type="similarity">
    <text evidence="5">Belongs to the cysteine dioxygenase family.</text>
</comment>